<organism>
    <name type="scientific">Bacillus cereus (strain AH187)</name>
    <dbReference type="NCBI Taxonomy" id="405534"/>
    <lineage>
        <taxon>Bacteria</taxon>
        <taxon>Bacillati</taxon>
        <taxon>Bacillota</taxon>
        <taxon>Bacilli</taxon>
        <taxon>Bacillales</taxon>
        <taxon>Bacillaceae</taxon>
        <taxon>Bacillus</taxon>
        <taxon>Bacillus cereus group</taxon>
    </lineage>
</organism>
<gene>
    <name evidence="1" type="primary">rpmF</name>
    <name type="ordered locus">BCAH187_A3976</name>
</gene>
<comment type="similarity">
    <text evidence="1">Belongs to the bacterial ribosomal protein bL32 family.</text>
</comment>
<evidence type="ECO:0000255" key="1">
    <source>
        <dbReference type="HAMAP-Rule" id="MF_00340"/>
    </source>
</evidence>
<evidence type="ECO:0000305" key="2"/>
<proteinExistence type="inferred from homology"/>
<name>RL32_BACC7</name>
<keyword id="KW-0687">Ribonucleoprotein</keyword>
<keyword id="KW-0689">Ribosomal protein</keyword>
<protein>
    <recommendedName>
        <fullName evidence="1">Large ribosomal subunit protein bL32</fullName>
    </recommendedName>
    <alternativeName>
        <fullName evidence="2">50S ribosomal protein L32</fullName>
    </alternativeName>
</protein>
<sequence>MAVPFRRTSKTVKRKRRTHFKLSVPGMVECPSCGEAKLAHRVCKACGTYKGKEVISK</sequence>
<feature type="chain" id="PRO_1000120087" description="Large ribosomal subunit protein bL32">
    <location>
        <begin position="1"/>
        <end position="57"/>
    </location>
</feature>
<reference key="1">
    <citation type="submission" date="2008-10" db="EMBL/GenBank/DDBJ databases">
        <title>Genome sequence of Bacillus cereus AH187.</title>
        <authorList>
            <person name="Dodson R.J."/>
            <person name="Durkin A.S."/>
            <person name="Rosovitz M.J."/>
            <person name="Rasko D.A."/>
            <person name="Kolsto A.B."/>
            <person name="Okstad O.A."/>
            <person name="Ravel J."/>
            <person name="Sutton G."/>
        </authorList>
    </citation>
    <scope>NUCLEOTIDE SEQUENCE [LARGE SCALE GENOMIC DNA]</scope>
    <source>
        <strain>AH187</strain>
    </source>
</reference>
<accession>B7HM44</accession>
<dbReference type="EMBL" id="CP001177">
    <property type="protein sequence ID" value="ACJ81257.1"/>
    <property type="molecule type" value="Genomic_DNA"/>
</dbReference>
<dbReference type="SMR" id="B7HM44"/>
<dbReference type="KEGG" id="bcr:BCAH187_A3976"/>
<dbReference type="HOGENOM" id="CLU_129084_1_3_9"/>
<dbReference type="Proteomes" id="UP000002214">
    <property type="component" value="Chromosome"/>
</dbReference>
<dbReference type="GO" id="GO:0015934">
    <property type="term" value="C:large ribosomal subunit"/>
    <property type="evidence" value="ECO:0007669"/>
    <property type="project" value="InterPro"/>
</dbReference>
<dbReference type="GO" id="GO:0003735">
    <property type="term" value="F:structural constituent of ribosome"/>
    <property type="evidence" value="ECO:0007669"/>
    <property type="project" value="InterPro"/>
</dbReference>
<dbReference type="GO" id="GO:0006412">
    <property type="term" value="P:translation"/>
    <property type="evidence" value="ECO:0007669"/>
    <property type="project" value="UniProtKB-UniRule"/>
</dbReference>
<dbReference type="HAMAP" id="MF_00340">
    <property type="entry name" value="Ribosomal_bL32"/>
    <property type="match status" value="1"/>
</dbReference>
<dbReference type="InterPro" id="IPR002677">
    <property type="entry name" value="Ribosomal_bL32"/>
</dbReference>
<dbReference type="InterPro" id="IPR044957">
    <property type="entry name" value="Ribosomal_bL32_bact"/>
</dbReference>
<dbReference type="InterPro" id="IPR011332">
    <property type="entry name" value="Ribosomal_zn-bd"/>
</dbReference>
<dbReference type="NCBIfam" id="TIGR01031">
    <property type="entry name" value="rpmF_bact"/>
    <property type="match status" value="1"/>
</dbReference>
<dbReference type="PANTHER" id="PTHR35534">
    <property type="entry name" value="50S RIBOSOMAL PROTEIN L32"/>
    <property type="match status" value="1"/>
</dbReference>
<dbReference type="PANTHER" id="PTHR35534:SF2">
    <property type="entry name" value="LARGE RIBOSOMAL SUBUNIT PROTEIN BL32"/>
    <property type="match status" value="1"/>
</dbReference>
<dbReference type="Pfam" id="PF01783">
    <property type="entry name" value="Ribosomal_L32p"/>
    <property type="match status" value="1"/>
</dbReference>
<dbReference type="SUPFAM" id="SSF57829">
    <property type="entry name" value="Zn-binding ribosomal proteins"/>
    <property type="match status" value="1"/>
</dbReference>